<accession>C4Z2R3</accession>
<comment type="function">
    <text evidence="1">Forms part of the ribosomal stalk which helps the ribosome interact with GTP-bound translation factors. Is thus essential for accurate translation.</text>
</comment>
<comment type="subunit">
    <text evidence="1">Homodimer. Part of the ribosomal stalk of the 50S ribosomal subunit. Forms a multimeric L10(L12)X complex, where L10 forms an elongated spine to which 2 to 4 L12 dimers bind in a sequential fashion. Binds GTP-bound translation factors.</text>
</comment>
<comment type="similarity">
    <text evidence="1">Belongs to the bacterial ribosomal protein bL12 family.</text>
</comment>
<feature type="chain" id="PRO_1000205558" description="Large ribosomal subunit protein bL12">
    <location>
        <begin position="1"/>
        <end position="121"/>
    </location>
</feature>
<keyword id="KW-1185">Reference proteome</keyword>
<keyword id="KW-0687">Ribonucleoprotein</keyword>
<keyword id="KW-0689">Ribosomal protein</keyword>
<reference key="1">
    <citation type="journal article" date="2009" name="Proc. Natl. Acad. Sci. U.S.A.">
        <title>Characterizing a model human gut microbiota composed of members of its two dominant bacterial phyla.</title>
        <authorList>
            <person name="Mahowald M.A."/>
            <person name="Rey F.E."/>
            <person name="Seedorf H."/>
            <person name="Turnbaugh P.J."/>
            <person name="Fulton R.S."/>
            <person name="Wollam A."/>
            <person name="Shah N."/>
            <person name="Wang C."/>
            <person name="Magrini V."/>
            <person name="Wilson R.K."/>
            <person name="Cantarel B.L."/>
            <person name="Coutinho P.M."/>
            <person name="Henrissat B."/>
            <person name="Crock L.W."/>
            <person name="Russell A."/>
            <person name="Verberkmoes N.C."/>
            <person name="Hettich R.L."/>
            <person name="Gordon J.I."/>
        </authorList>
    </citation>
    <scope>NUCLEOTIDE SEQUENCE [LARGE SCALE GENOMIC DNA]</scope>
    <source>
        <strain>ATCC 27750 / DSM 3376 / VPI C15-48 / C15-B4</strain>
    </source>
</reference>
<evidence type="ECO:0000255" key="1">
    <source>
        <dbReference type="HAMAP-Rule" id="MF_00368"/>
    </source>
</evidence>
<evidence type="ECO:0000305" key="2"/>
<sequence>MTTQEIIEVIKGLSVLELNDLVKACEEEFGVSAAAGVVVAAAGAGAAAAEEKTEFDVELTEAGDQKVKVIKVVREITGLGLKEAKDVVDGAPKVVKEQASKEEAEEIKKKLEEVGAKVTLK</sequence>
<gene>
    <name evidence="1" type="primary">rplL</name>
    <name type="ordered locus">EUBELI_00282</name>
</gene>
<proteinExistence type="inferred from homology"/>
<name>RL7_LACE2</name>
<dbReference type="EMBL" id="CP001104">
    <property type="protein sequence ID" value="ACR71318.1"/>
    <property type="molecule type" value="Genomic_DNA"/>
</dbReference>
<dbReference type="RefSeq" id="WP_012738555.1">
    <property type="nucleotide sequence ID" value="NC_012778.1"/>
</dbReference>
<dbReference type="SMR" id="C4Z2R3"/>
<dbReference type="STRING" id="515620.EUBELI_00282"/>
<dbReference type="GeneID" id="41355055"/>
<dbReference type="KEGG" id="eel:EUBELI_00282"/>
<dbReference type="eggNOG" id="COG0222">
    <property type="taxonomic scope" value="Bacteria"/>
</dbReference>
<dbReference type="HOGENOM" id="CLU_086499_3_2_9"/>
<dbReference type="Proteomes" id="UP000001476">
    <property type="component" value="Chromosome"/>
</dbReference>
<dbReference type="GO" id="GO:0022625">
    <property type="term" value="C:cytosolic large ribosomal subunit"/>
    <property type="evidence" value="ECO:0007669"/>
    <property type="project" value="TreeGrafter"/>
</dbReference>
<dbReference type="GO" id="GO:0003729">
    <property type="term" value="F:mRNA binding"/>
    <property type="evidence" value="ECO:0007669"/>
    <property type="project" value="TreeGrafter"/>
</dbReference>
<dbReference type="GO" id="GO:0003735">
    <property type="term" value="F:structural constituent of ribosome"/>
    <property type="evidence" value="ECO:0007669"/>
    <property type="project" value="InterPro"/>
</dbReference>
<dbReference type="GO" id="GO:0006412">
    <property type="term" value="P:translation"/>
    <property type="evidence" value="ECO:0007669"/>
    <property type="project" value="UniProtKB-UniRule"/>
</dbReference>
<dbReference type="CDD" id="cd00387">
    <property type="entry name" value="Ribosomal_L7_L12"/>
    <property type="match status" value="1"/>
</dbReference>
<dbReference type="FunFam" id="3.30.1390.10:FF:000001">
    <property type="entry name" value="50S ribosomal protein L7/L12"/>
    <property type="match status" value="1"/>
</dbReference>
<dbReference type="Gene3D" id="3.30.1390.10">
    <property type="match status" value="1"/>
</dbReference>
<dbReference type="Gene3D" id="1.20.5.710">
    <property type="entry name" value="Single helix bin"/>
    <property type="match status" value="1"/>
</dbReference>
<dbReference type="HAMAP" id="MF_00368">
    <property type="entry name" value="Ribosomal_bL12"/>
    <property type="match status" value="1"/>
</dbReference>
<dbReference type="InterPro" id="IPR000206">
    <property type="entry name" value="Ribosomal_bL12"/>
</dbReference>
<dbReference type="InterPro" id="IPR013823">
    <property type="entry name" value="Ribosomal_bL12_C"/>
</dbReference>
<dbReference type="InterPro" id="IPR014719">
    <property type="entry name" value="Ribosomal_bL12_C/ClpS-like"/>
</dbReference>
<dbReference type="InterPro" id="IPR008932">
    <property type="entry name" value="Ribosomal_bL12_oligo"/>
</dbReference>
<dbReference type="InterPro" id="IPR036235">
    <property type="entry name" value="Ribosomal_bL12_oligo_N_sf"/>
</dbReference>
<dbReference type="NCBIfam" id="TIGR00855">
    <property type="entry name" value="L12"/>
    <property type="match status" value="1"/>
</dbReference>
<dbReference type="PANTHER" id="PTHR45987">
    <property type="entry name" value="39S RIBOSOMAL PROTEIN L12"/>
    <property type="match status" value="1"/>
</dbReference>
<dbReference type="PANTHER" id="PTHR45987:SF4">
    <property type="entry name" value="LARGE RIBOSOMAL SUBUNIT PROTEIN BL12M"/>
    <property type="match status" value="1"/>
</dbReference>
<dbReference type="Pfam" id="PF00542">
    <property type="entry name" value="Ribosomal_L12"/>
    <property type="match status" value="1"/>
</dbReference>
<dbReference type="Pfam" id="PF16320">
    <property type="entry name" value="Ribosomal_L12_N"/>
    <property type="match status" value="1"/>
</dbReference>
<dbReference type="SUPFAM" id="SSF54736">
    <property type="entry name" value="ClpS-like"/>
    <property type="match status" value="1"/>
</dbReference>
<dbReference type="SUPFAM" id="SSF48300">
    <property type="entry name" value="Ribosomal protein L7/12, oligomerisation (N-terminal) domain"/>
    <property type="match status" value="1"/>
</dbReference>
<protein>
    <recommendedName>
        <fullName evidence="1">Large ribosomal subunit protein bL12</fullName>
    </recommendedName>
    <alternativeName>
        <fullName evidence="2">50S ribosomal protein L7/L12</fullName>
    </alternativeName>
</protein>
<organism>
    <name type="scientific">Lachnospira eligens (strain ATCC 27750 / DSM 3376 / VPI C15-48 / C15-B4)</name>
    <name type="common">Eubacterium eligens</name>
    <dbReference type="NCBI Taxonomy" id="515620"/>
    <lineage>
        <taxon>Bacteria</taxon>
        <taxon>Bacillati</taxon>
        <taxon>Bacillota</taxon>
        <taxon>Clostridia</taxon>
        <taxon>Lachnospirales</taxon>
        <taxon>Lachnospiraceae</taxon>
        <taxon>Lachnospira</taxon>
    </lineage>
</organism>